<sequence>MAPTRKSKSVNKRFTNEASPDINFGSASKTKQRKKKLADKLGPQWTKRELVRFYDAYRKYVGDWKKVAAAVRNNRSVEMVETLFCMNRAYLSLPEGTASVAGLIAMMTDHYSVMEGSESEGEDHDASEVTRKHLKRKRPQVLPSDFREEVVPPHSVASVEGCLSFLKQTQAYEKRQRATGKRTPRFLVAITHERDDIEDFSPPNKRAKKQLDADDDASRRGGGSPYRRKELSEITPTRLRKTSQAQEAQFKHPDSSMFENGVRDRWHKKGAADRDGALLMDMEGLVTQKEKIVRVEEAEGNYSDDDDGLGALKTLAEMSASLAPAGLLESESSPHWEEERKTNNVDKKSNTLETVSTSHHREKAKQAGLEDNLLHAISAPDKRKPKSVPESVDGNVVSIEELRTSSRKRKPKFQVLDVVAPKESTQDKSLYTKESAEVDSLKTPVKARRSSQGPAKQLKTAKTTVESSSASDKKITGPDAVVPATQVSASGPETLPQKPPNRRKISLKKSLQERAKSLETTHDKPRSFKKLSEHELLQEKLSNCLSYPLVRRWCIYEWFYSAIDYPWFAKMEFTDYLNHVGLGHAPRLTRVEWSVIKSSLGRPRRLSQRFLQDERDKLQEYRESVRKHYTELRGCATGVLHTDLARPLSVGNRVIAIHPKTREIRDGKILTVDHNKCNVLFDELGVELVMDIDCMPLNPLEYMPEGLRRQIDKCLAICKEARLNRHPSSDASVLFSPSVLENVNFSMNPPPAKQDDIREPVLYGKVIATNTTDQSIVINSKVTGTEIQRTLALQHTSDAQEMEPEMIEIVIESKSIAQAMVDAAIKAASSGKNNEDSENMVHQALSSIGEHQPLDNSIVPGIKHQEYTNGSLDHHSLNTAEPMSNGFISQEGSGKNKTPMPSELITSCVASWLMMQMISKKQYPPADVAQLMDTVVNDLQPRCPQNMPIYREIQTCMGLIKTQIMALVRTS</sequence>
<comment type="subcellular location">
    <subcellularLocation>
        <location evidence="2">Nucleus</location>
    </subcellularLocation>
</comment>
<comment type="tissue specificity">
    <text evidence="2">Expressed ubiquitously in vegetative and reproductive tissues.</text>
</comment>
<evidence type="ECO:0000256" key="1">
    <source>
        <dbReference type="SAM" id="MobiDB-lite"/>
    </source>
</evidence>
<evidence type="ECO:0000269" key="2">
    <source>
    </source>
</evidence>
<evidence type="ECO:0000305" key="3"/>
<reference key="1">
    <citation type="journal article" date="2004" name="Gene">
        <title>Gene structure and molecular analysis of Arabidopsis thaliana ALWAYS EARLY homologs.</title>
        <authorList>
            <person name="Bhatt A.M."/>
            <person name="Zhang Q."/>
            <person name="Harris S.A."/>
            <person name="White-Cooper H."/>
            <person name="Dickinson H."/>
        </authorList>
    </citation>
    <scope>NUCLEOTIDE SEQUENCE [MRNA]</scope>
    <scope>SUBCELLULAR LOCATION</scope>
    <scope>TISSUE SPECIFICITY</scope>
</reference>
<reference key="2">
    <citation type="journal article" date="2000" name="Nature">
        <title>Sequence and analysis of chromosome 5 of the plant Arabidopsis thaliana.</title>
        <authorList>
            <person name="Tabata S."/>
            <person name="Kaneko T."/>
            <person name="Nakamura Y."/>
            <person name="Kotani H."/>
            <person name="Kato T."/>
            <person name="Asamizu E."/>
            <person name="Miyajima N."/>
            <person name="Sasamoto S."/>
            <person name="Kimura T."/>
            <person name="Hosouchi T."/>
            <person name="Kawashima K."/>
            <person name="Kohara M."/>
            <person name="Matsumoto M."/>
            <person name="Matsuno A."/>
            <person name="Muraki A."/>
            <person name="Nakayama S."/>
            <person name="Nakazaki N."/>
            <person name="Naruo K."/>
            <person name="Okumura S."/>
            <person name="Shinpo S."/>
            <person name="Takeuchi C."/>
            <person name="Wada T."/>
            <person name="Watanabe A."/>
            <person name="Yamada M."/>
            <person name="Yasuda M."/>
            <person name="Sato S."/>
            <person name="de la Bastide M."/>
            <person name="Huang E."/>
            <person name="Spiegel L."/>
            <person name="Gnoj L."/>
            <person name="O'Shaughnessy A."/>
            <person name="Preston R."/>
            <person name="Habermann K."/>
            <person name="Murray J."/>
            <person name="Johnson D."/>
            <person name="Rohlfing T."/>
            <person name="Nelson J."/>
            <person name="Stoneking T."/>
            <person name="Pepin K."/>
            <person name="Spieth J."/>
            <person name="Sekhon M."/>
            <person name="Armstrong J."/>
            <person name="Becker M."/>
            <person name="Belter E."/>
            <person name="Cordum H."/>
            <person name="Cordes M."/>
            <person name="Courtney L."/>
            <person name="Courtney W."/>
            <person name="Dante M."/>
            <person name="Du H."/>
            <person name="Edwards J."/>
            <person name="Fryman J."/>
            <person name="Haakensen B."/>
            <person name="Lamar E."/>
            <person name="Latreille P."/>
            <person name="Leonard S."/>
            <person name="Meyer R."/>
            <person name="Mulvaney E."/>
            <person name="Ozersky P."/>
            <person name="Riley A."/>
            <person name="Strowmatt C."/>
            <person name="Wagner-McPherson C."/>
            <person name="Wollam A."/>
            <person name="Yoakum M."/>
            <person name="Bell M."/>
            <person name="Dedhia N."/>
            <person name="Parnell L."/>
            <person name="Shah R."/>
            <person name="Rodriguez M."/>
            <person name="Hoon See L."/>
            <person name="Vil D."/>
            <person name="Baker J."/>
            <person name="Kirchoff K."/>
            <person name="Toth K."/>
            <person name="King L."/>
            <person name="Bahret A."/>
            <person name="Miller B."/>
            <person name="Marra M.A."/>
            <person name="Martienssen R."/>
            <person name="McCombie W.R."/>
            <person name="Wilson R.K."/>
            <person name="Murphy G."/>
            <person name="Bancroft I."/>
            <person name="Volckaert G."/>
            <person name="Wambutt R."/>
            <person name="Duesterhoeft A."/>
            <person name="Stiekema W."/>
            <person name="Pohl T."/>
            <person name="Entian K.-D."/>
            <person name="Terryn N."/>
            <person name="Hartley N."/>
            <person name="Bent E."/>
            <person name="Johnson S."/>
            <person name="Langham S.-A."/>
            <person name="McCullagh B."/>
            <person name="Robben J."/>
            <person name="Grymonprez B."/>
            <person name="Zimmermann W."/>
            <person name="Ramsperger U."/>
            <person name="Wedler H."/>
            <person name="Balke K."/>
            <person name="Wedler E."/>
            <person name="Peters S."/>
            <person name="van Staveren M."/>
            <person name="Dirkse W."/>
            <person name="Mooijman P."/>
            <person name="Klein Lankhorst R."/>
            <person name="Weitzenegger T."/>
            <person name="Bothe G."/>
            <person name="Rose M."/>
            <person name="Hauf J."/>
            <person name="Berneiser S."/>
            <person name="Hempel S."/>
            <person name="Feldpausch M."/>
            <person name="Lamberth S."/>
            <person name="Villarroel R."/>
            <person name="Gielen J."/>
            <person name="Ardiles W."/>
            <person name="Bents O."/>
            <person name="Lemcke K."/>
            <person name="Kolesov G."/>
            <person name="Mayer K.F.X."/>
            <person name="Rudd S."/>
            <person name="Schoof H."/>
            <person name="Schueller C."/>
            <person name="Zaccaria P."/>
            <person name="Mewes H.-W."/>
            <person name="Bevan M."/>
            <person name="Fransz P.F."/>
        </authorList>
    </citation>
    <scope>NUCLEOTIDE SEQUENCE [LARGE SCALE GENOMIC DNA]</scope>
    <source>
        <strain>cv. Columbia</strain>
    </source>
</reference>
<reference key="3">
    <citation type="journal article" date="2017" name="Plant J.">
        <title>Araport11: a complete reannotation of the Arabidopsis thaliana reference genome.</title>
        <authorList>
            <person name="Cheng C.Y."/>
            <person name="Krishnakumar V."/>
            <person name="Chan A.P."/>
            <person name="Thibaud-Nissen F."/>
            <person name="Schobel S."/>
            <person name="Town C.D."/>
        </authorList>
    </citation>
    <scope>GENOME REANNOTATION</scope>
    <source>
        <strain>cv. Columbia</strain>
    </source>
</reference>
<reference key="4">
    <citation type="submission" date="2009-03" db="EMBL/GenBank/DDBJ databases">
        <title>ORF cloning and analysis of Arabidopsis transcription factor genes.</title>
        <authorList>
            <person name="Fujita M."/>
            <person name="Mizukado S."/>
            <person name="Seki M."/>
            <person name="Shinozaki K."/>
            <person name="Mitsuda N."/>
            <person name="Takiguchi Y."/>
            <person name="Takagi M."/>
        </authorList>
    </citation>
    <scope>NUCLEOTIDE SEQUENCE [LARGE SCALE MRNA]</scope>
</reference>
<organism>
    <name type="scientific">Arabidopsis thaliana</name>
    <name type="common">Mouse-ear cress</name>
    <dbReference type="NCBI Taxonomy" id="3702"/>
    <lineage>
        <taxon>Eukaryota</taxon>
        <taxon>Viridiplantae</taxon>
        <taxon>Streptophyta</taxon>
        <taxon>Embryophyta</taxon>
        <taxon>Tracheophyta</taxon>
        <taxon>Spermatophyta</taxon>
        <taxon>Magnoliopsida</taxon>
        <taxon>eudicotyledons</taxon>
        <taxon>Gunneridae</taxon>
        <taxon>Pentapetalae</taxon>
        <taxon>rosids</taxon>
        <taxon>malvids</taxon>
        <taxon>Brassicales</taxon>
        <taxon>Brassicaceae</taxon>
        <taxon>Camelineae</taxon>
        <taxon>Arabidopsis</taxon>
    </lineage>
</organism>
<name>ALY1_ARATH</name>
<protein>
    <recommendedName>
        <fullName>Protein ALWAYS EARLY 1</fullName>
        <shortName>AtALY1</shortName>
    </recommendedName>
</protein>
<dbReference type="EMBL" id="AJ583498">
    <property type="protein sequence ID" value="CAE47463.1"/>
    <property type="molecule type" value="mRNA"/>
</dbReference>
<dbReference type="EMBL" id="AC007478">
    <property type="status" value="NOT_ANNOTATED_CDS"/>
    <property type="molecule type" value="Genomic_DNA"/>
</dbReference>
<dbReference type="EMBL" id="CP002688">
    <property type="protein sequence ID" value="AED93706.1"/>
    <property type="molecule type" value="Genomic_DNA"/>
</dbReference>
<dbReference type="EMBL" id="AB493764">
    <property type="protein sequence ID" value="BAH30602.1"/>
    <property type="molecule type" value="mRNA"/>
</dbReference>
<dbReference type="RefSeq" id="NP_198113.2">
    <property type="nucleotide sequence ID" value="NM_122643.3"/>
</dbReference>
<dbReference type="SMR" id="Q6A331"/>
<dbReference type="FunCoup" id="Q6A331">
    <property type="interactions" value="5"/>
</dbReference>
<dbReference type="STRING" id="3702.Q6A331"/>
<dbReference type="iPTMnet" id="Q6A331"/>
<dbReference type="PaxDb" id="3702-AT5G27610.1"/>
<dbReference type="ProteomicsDB" id="244902"/>
<dbReference type="EnsemblPlants" id="AT5G27610.1">
    <property type="protein sequence ID" value="AT5G27610.1"/>
    <property type="gene ID" value="AT5G27610"/>
</dbReference>
<dbReference type="GeneID" id="832823"/>
<dbReference type="Gramene" id="AT5G27610.1">
    <property type="protein sequence ID" value="AT5G27610.1"/>
    <property type="gene ID" value="AT5G27610"/>
</dbReference>
<dbReference type="KEGG" id="ath:AT5G27610"/>
<dbReference type="Araport" id="AT5G27610"/>
<dbReference type="TAIR" id="AT5G27610">
    <property type="gene designation" value="ALY1"/>
</dbReference>
<dbReference type="eggNOG" id="KOG1019">
    <property type="taxonomic scope" value="Eukaryota"/>
</dbReference>
<dbReference type="HOGENOM" id="CLU_007109_0_0_1"/>
<dbReference type="InParanoid" id="Q6A331"/>
<dbReference type="OMA" id="AKMEFTD"/>
<dbReference type="PhylomeDB" id="Q6A331"/>
<dbReference type="PRO" id="PR:Q6A331"/>
<dbReference type="Proteomes" id="UP000006548">
    <property type="component" value="Chromosome 5"/>
</dbReference>
<dbReference type="ExpressionAtlas" id="Q6A331">
    <property type="expression patterns" value="baseline and differential"/>
</dbReference>
<dbReference type="GO" id="GO:0070176">
    <property type="term" value="C:DRM complex"/>
    <property type="evidence" value="ECO:0000314"/>
    <property type="project" value="TAIR"/>
</dbReference>
<dbReference type="GO" id="GO:0006351">
    <property type="term" value="P:DNA-templated transcription"/>
    <property type="evidence" value="ECO:0007669"/>
    <property type="project" value="InterPro"/>
</dbReference>
<dbReference type="CDD" id="cd00167">
    <property type="entry name" value="SANT"/>
    <property type="match status" value="1"/>
</dbReference>
<dbReference type="Gene3D" id="1.20.58.1880">
    <property type="match status" value="1"/>
</dbReference>
<dbReference type="InterPro" id="IPR033471">
    <property type="entry name" value="DIRP"/>
</dbReference>
<dbReference type="InterPro" id="IPR009057">
    <property type="entry name" value="Homeodomain-like_sf"/>
</dbReference>
<dbReference type="InterPro" id="IPR010561">
    <property type="entry name" value="LIN-9/ALY1"/>
</dbReference>
<dbReference type="InterPro" id="IPR001005">
    <property type="entry name" value="SANT/Myb"/>
</dbReference>
<dbReference type="PANTHER" id="PTHR21689">
    <property type="entry name" value="LIN-9"/>
    <property type="match status" value="1"/>
</dbReference>
<dbReference type="PANTHER" id="PTHR21689:SF5">
    <property type="entry name" value="PROTEIN ALWAYS EARLY 1-RELATED"/>
    <property type="match status" value="1"/>
</dbReference>
<dbReference type="Pfam" id="PF06584">
    <property type="entry name" value="DIRP"/>
    <property type="match status" value="1"/>
</dbReference>
<dbReference type="SMART" id="SM01135">
    <property type="entry name" value="DIRP"/>
    <property type="match status" value="1"/>
</dbReference>
<dbReference type="SUPFAM" id="SSF46689">
    <property type="entry name" value="Homeodomain-like"/>
    <property type="match status" value="1"/>
</dbReference>
<proteinExistence type="evidence at transcript level"/>
<keyword id="KW-0539">Nucleus</keyword>
<keyword id="KW-1185">Reference proteome</keyword>
<feature type="chain" id="PRO_0000394045" description="Protein ALWAYS EARLY 1">
    <location>
        <begin position="1"/>
        <end position="971"/>
    </location>
</feature>
<feature type="domain" description="SANT">
    <location>
        <begin position="40"/>
        <end position="98"/>
    </location>
</feature>
<feature type="region of interest" description="Disordered" evidence="1">
    <location>
        <begin position="1"/>
        <end position="40"/>
    </location>
</feature>
<feature type="region of interest" description="Disordered" evidence="1">
    <location>
        <begin position="117"/>
        <end position="137"/>
    </location>
</feature>
<feature type="region of interest" description="Disordered" evidence="1">
    <location>
        <begin position="197"/>
        <end position="260"/>
    </location>
</feature>
<feature type="region of interest" description="Disordered" evidence="1">
    <location>
        <begin position="326"/>
        <end position="371"/>
    </location>
</feature>
<feature type="region of interest" description="Disordered" evidence="1">
    <location>
        <begin position="421"/>
        <end position="507"/>
    </location>
</feature>
<feature type="compositionally biased region" description="Basic residues" evidence="1">
    <location>
        <begin position="1"/>
        <end position="11"/>
    </location>
</feature>
<feature type="compositionally biased region" description="Basic and acidic residues" evidence="1">
    <location>
        <begin position="209"/>
        <end position="219"/>
    </location>
</feature>
<feature type="compositionally biased region" description="Basic and acidic residues" evidence="1">
    <location>
        <begin position="332"/>
        <end position="350"/>
    </location>
</feature>
<feature type="compositionally biased region" description="Basic and acidic residues" evidence="1">
    <location>
        <begin position="424"/>
        <end position="440"/>
    </location>
</feature>
<feature type="compositionally biased region" description="Polar residues" evidence="1">
    <location>
        <begin position="450"/>
        <end position="470"/>
    </location>
</feature>
<feature type="sequence conflict" description="In Ref. 1; CAE47463." evidence="3" ref="1">
    <original>S</original>
    <variation>P</variation>
    <location>
        <position position="893"/>
    </location>
</feature>
<feature type="sequence conflict" description="In Ref. 1; CAE47463." evidence="3" ref="1">
    <original>Q</original>
    <variation>R</variation>
    <location>
        <position position="916"/>
    </location>
</feature>
<gene>
    <name type="primary">ALY1</name>
    <name type="ordered locus">At5g27610</name>
    <name type="ORF">F15A18.70</name>
</gene>
<accession>Q6A331</accession>
<accession>C0SVR1</accession>